<gene>
    <name evidence="1" type="primary">rplY</name>
    <name evidence="1" type="synonym">ctc</name>
    <name type="ordered locus">Gura_3681</name>
</gene>
<sequence length="194" mass="20803">MEERVLNVELRTKTGKGISRQLRRNNFIPGVVYGKGMESVPVSLSTKELSTAIAGEGGRNHLLTLKGGGGLDGQMVIVAELLQDCLKGTPRHVDLHKINMADKVRVKVPVNLVGSAVGVKEGGLLDFAMHEIEIECFPTHIPEHIDVDVTELTIGHSLHIGDIKELPGIKVLGDATVSVVSILGKVKEEPVVDA</sequence>
<accession>A5G7R6</accession>
<evidence type="ECO:0000255" key="1">
    <source>
        <dbReference type="HAMAP-Rule" id="MF_01334"/>
    </source>
</evidence>
<evidence type="ECO:0000305" key="2"/>
<feature type="chain" id="PRO_1000086629" description="Large ribosomal subunit protein bL25">
    <location>
        <begin position="1"/>
        <end position="194"/>
    </location>
</feature>
<keyword id="KW-1185">Reference proteome</keyword>
<keyword id="KW-0687">Ribonucleoprotein</keyword>
<keyword id="KW-0689">Ribosomal protein</keyword>
<keyword id="KW-0694">RNA-binding</keyword>
<keyword id="KW-0699">rRNA-binding</keyword>
<name>RL25_GEOUR</name>
<comment type="function">
    <text evidence="1">This is one of the proteins that binds to the 5S RNA in the ribosome where it forms part of the central protuberance.</text>
</comment>
<comment type="subunit">
    <text evidence="1">Part of the 50S ribosomal subunit; part of the 5S rRNA/L5/L18/L25 subcomplex. Contacts the 5S rRNA. Binds to the 5S rRNA independently of L5 and L18.</text>
</comment>
<comment type="similarity">
    <text evidence="1">Belongs to the bacterial ribosomal protein bL25 family. CTC subfamily.</text>
</comment>
<dbReference type="EMBL" id="CP000698">
    <property type="protein sequence ID" value="ABQ27834.1"/>
    <property type="molecule type" value="Genomic_DNA"/>
</dbReference>
<dbReference type="RefSeq" id="WP_011940487.1">
    <property type="nucleotide sequence ID" value="NC_009483.1"/>
</dbReference>
<dbReference type="SMR" id="A5G7R6"/>
<dbReference type="STRING" id="351605.Gura_3681"/>
<dbReference type="KEGG" id="gur:Gura_3681"/>
<dbReference type="HOGENOM" id="CLU_075939_2_1_7"/>
<dbReference type="OrthoDB" id="9786489at2"/>
<dbReference type="Proteomes" id="UP000006695">
    <property type="component" value="Chromosome"/>
</dbReference>
<dbReference type="GO" id="GO:0022625">
    <property type="term" value="C:cytosolic large ribosomal subunit"/>
    <property type="evidence" value="ECO:0007669"/>
    <property type="project" value="TreeGrafter"/>
</dbReference>
<dbReference type="GO" id="GO:0008097">
    <property type="term" value="F:5S rRNA binding"/>
    <property type="evidence" value="ECO:0007669"/>
    <property type="project" value="InterPro"/>
</dbReference>
<dbReference type="GO" id="GO:0003735">
    <property type="term" value="F:structural constituent of ribosome"/>
    <property type="evidence" value="ECO:0007669"/>
    <property type="project" value="InterPro"/>
</dbReference>
<dbReference type="GO" id="GO:0006412">
    <property type="term" value="P:translation"/>
    <property type="evidence" value="ECO:0007669"/>
    <property type="project" value="UniProtKB-UniRule"/>
</dbReference>
<dbReference type="CDD" id="cd00495">
    <property type="entry name" value="Ribosomal_L25_TL5_CTC"/>
    <property type="match status" value="1"/>
</dbReference>
<dbReference type="Gene3D" id="2.170.120.20">
    <property type="entry name" value="Ribosomal protein L25, beta domain"/>
    <property type="match status" value="1"/>
</dbReference>
<dbReference type="Gene3D" id="2.40.240.10">
    <property type="entry name" value="Ribosomal Protein L25, Chain P"/>
    <property type="match status" value="1"/>
</dbReference>
<dbReference type="HAMAP" id="MF_01334">
    <property type="entry name" value="Ribosomal_bL25_CTC"/>
    <property type="match status" value="1"/>
</dbReference>
<dbReference type="InterPro" id="IPR020056">
    <property type="entry name" value="Rbsml_bL25/Gln-tRNA_synth_N"/>
</dbReference>
<dbReference type="InterPro" id="IPR011035">
    <property type="entry name" value="Ribosomal_bL25/Gln-tRNA_synth"/>
</dbReference>
<dbReference type="InterPro" id="IPR020057">
    <property type="entry name" value="Ribosomal_bL25_b-dom"/>
</dbReference>
<dbReference type="InterPro" id="IPR037121">
    <property type="entry name" value="Ribosomal_bL25_C"/>
</dbReference>
<dbReference type="InterPro" id="IPR001021">
    <property type="entry name" value="Ribosomal_bL25_long"/>
</dbReference>
<dbReference type="InterPro" id="IPR029751">
    <property type="entry name" value="Ribosomal_L25_dom"/>
</dbReference>
<dbReference type="InterPro" id="IPR020930">
    <property type="entry name" value="Ribosomal_uL5_bac-type"/>
</dbReference>
<dbReference type="NCBIfam" id="TIGR00731">
    <property type="entry name" value="bL25_bact_ctc"/>
    <property type="match status" value="1"/>
</dbReference>
<dbReference type="PANTHER" id="PTHR33284">
    <property type="entry name" value="RIBOSOMAL PROTEIN L25/GLN-TRNA SYNTHETASE, ANTI-CODON-BINDING DOMAIN-CONTAINING PROTEIN"/>
    <property type="match status" value="1"/>
</dbReference>
<dbReference type="PANTHER" id="PTHR33284:SF1">
    <property type="entry name" value="RIBOSOMAL PROTEIN L25_GLN-TRNA SYNTHETASE, ANTI-CODON-BINDING DOMAIN-CONTAINING PROTEIN"/>
    <property type="match status" value="1"/>
</dbReference>
<dbReference type="Pfam" id="PF01386">
    <property type="entry name" value="Ribosomal_L25p"/>
    <property type="match status" value="1"/>
</dbReference>
<dbReference type="Pfam" id="PF14693">
    <property type="entry name" value="Ribosomal_TL5_C"/>
    <property type="match status" value="1"/>
</dbReference>
<dbReference type="SUPFAM" id="SSF50715">
    <property type="entry name" value="Ribosomal protein L25-like"/>
    <property type="match status" value="1"/>
</dbReference>
<proteinExistence type="inferred from homology"/>
<reference key="1">
    <citation type="submission" date="2007-05" db="EMBL/GenBank/DDBJ databases">
        <title>Complete sequence of Geobacter uraniireducens Rf4.</title>
        <authorList>
            <consortium name="US DOE Joint Genome Institute"/>
            <person name="Copeland A."/>
            <person name="Lucas S."/>
            <person name="Lapidus A."/>
            <person name="Barry K."/>
            <person name="Detter J.C."/>
            <person name="Glavina del Rio T."/>
            <person name="Hammon N."/>
            <person name="Israni S."/>
            <person name="Dalin E."/>
            <person name="Tice H."/>
            <person name="Pitluck S."/>
            <person name="Chertkov O."/>
            <person name="Brettin T."/>
            <person name="Bruce D."/>
            <person name="Han C."/>
            <person name="Schmutz J."/>
            <person name="Larimer F."/>
            <person name="Land M."/>
            <person name="Hauser L."/>
            <person name="Kyrpides N."/>
            <person name="Mikhailova N."/>
            <person name="Shelobolina E."/>
            <person name="Aklujkar M."/>
            <person name="Lovley D."/>
            <person name="Richardson P."/>
        </authorList>
    </citation>
    <scope>NUCLEOTIDE SEQUENCE [LARGE SCALE GENOMIC DNA]</scope>
    <source>
        <strain>ATCC BAA-1134 / JCM 13001 / Rf4</strain>
    </source>
</reference>
<protein>
    <recommendedName>
        <fullName evidence="1">Large ribosomal subunit protein bL25</fullName>
    </recommendedName>
    <alternativeName>
        <fullName evidence="2">50S ribosomal protein L25</fullName>
    </alternativeName>
    <alternativeName>
        <fullName evidence="1">General stress protein CTC</fullName>
    </alternativeName>
</protein>
<organism>
    <name type="scientific">Geotalea uraniireducens (strain Rf4)</name>
    <name type="common">Geobacter uraniireducens</name>
    <dbReference type="NCBI Taxonomy" id="351605"/>
    <lineage>
        <taxon>Bacteria</taxon>
        <taxon>Pseudomonadati</taxon>
        <taxon>Thermodesulfobacteriota</taxon>
        <taxon>Desulfuromonadia</taxon>
        <taxon>Geobacterales</taxon>
        <taxon>Geobacteraceae</taxon>
        <taxon>Geotalea</taxon>
    </lineage>
</organism>